<gene>
    <name evidence="1" type="primary">rplI</name>
    <name type="ordered locus">Tfu_3092</name>
</gene>
<organism>
    <name type="scientific">Thermobifida fusca (strain YX)</name>
    <dbReference type="NCBI Taxonomy" id="269800"/>
    <lineage>
        <taxon>Bacteria</taxon>
        <taxon>Bacillati</taxon>
        <taxon>Actinomycetota</taxon>
        <taxon>Actinomycetes</taxon>
        <taxon>Streptosporangiales</taxon>
        <taxon>Nocardiopsidaceae</taxon>
        <taxon>Thermobifida</taxon>
    </lineage>
</organism>
<evidence type="ECO:0000255" key="1">
    <source>
        <dbReference type="HAMAP-Rule" id="MF_00503"/>
    </source>
</evidence>
<evidence type="ECO:0000305" key="2"/>
<protein>
    <recommendedName>
        <fullName evidence="1">Large ribosomal subunit protein bL9</fullName>
    </recommendedName>
    <alternativeName>
        <fullName evidence="2">50S ribosomal protein L9</fullName>
    </alternativeName>
</protein>
<keyword id="KW-0687">Ribonucleoprotein</keyword>
<keyword id="KW-0689">Ribosomal protein</keyword>
<keyword id="KW-0694">RNA-binding</keyword>
<keyword id="KW-0699">rRNA-binding</keyword>
<proteinExistence type="inferred from homology"/>
<feature type="chain" id="PRO_0000236609" description="Large ribosomal subunit protein bL9">
    <location>
        <begin position="1"/>
        <end position="148"/>
    </location>
</feature>
<accession>Q47K97</accession>
<sequence>MKLILTHEVDGLGSPGDVVEVKDGYGRNYLLPRGFAIKWTRGAQKQIDSIRRARAAREIRSLDEAKQIAEQLGSLKVRLNQRAGDNGRLFGSVTSTDVAEAVKAAGGPEVDKRRIQIRNPIKSVGDYTVEIRLHPEVNVSLPIEVVGV</sequence>
<comment type="function">
    <text evidence="1">Binds to the 23S rRNA.</text>
</comment>
<comment type="similarity">
    <text evidence="1">Belongs to the bacterial ribosomal protein bL9 family.</text>
</comment>
<reference key="1">
    <citation type="journal article" date="2007" name="J. Bacteriol.">
        <title>Genome sequence and analysis of the soil cellulolytic actinomycete Thermobifida fusca YX.</title>
        <authorList>
            <person name="Lykidis A."/>
            <person name="Mavromatis K."/>
            <person name="Ivanova N."/>
            <person name="Anderson I."/>
            <person name="Land M."/>
            <person name="DiBartolo G."/>
            <person name="Martinez M."/>
            <person name="Lapidus A."/>
            <person name="Lucas S."/>
            <person name="Copeland A."/>
            <person name="Richardson P."/>
            <person name="Wilson D.B."/>
            <person name="Kyrpides N."/>
        </authorList>
    </citation>
    <scope>NUCLEOTIDE SEQUENCE [LARGE SCALE GENOMIC DNA]</scope>
    <source>
        <strain>YX</strain>
    </source>
</reference>
<dbReference type="EMBL" id="CP000088">
    <property type="protein sequence ID" value="AAZ57125.1"/>
    <property type="molecule type" value="Genomic_DNA"/>
</dbReference>
<dbReference type="RefSeq" id="WP_011293509.1">
    <property type="nucleotide sequence ID" value="NC_007333.1"/>
</dbReference>
<dbReference type="SMR" id="Q47K97"/>
<dbReference type="STRING" id="269800.Tfu_3092"/>
<dbReference type="KEGG" id="tfu:Tfu_3092"/>
<dbReference type="eggNOG" id="COG0359">
    <property type="taxonomic scope" value="Bacteria"/>
</dbReference>
<dbReference type="HOGENOM" id="CLU_078938_5_1_11"/>
<dbReference type="OrthoDB" id="9788336at2"/>
<dbReference type="GO" id="GO:1990904">
    <property type="term" value="C:ribonucleoprotein complex"/>
    <property type="evidence" value="ECO:0007669"/>
    <property type="project" value="UniProtKB-KW"/>
</dbReference>
<dbReference type="GO" id="GO:0005840">
    <property type="term" value="C:ribosome"/>
    <property type="evidence" value="ECO:0007669"/>
    <property type="project" value="UniProtKB-KW"/>
</dbReference>
<dbReference type="GO" id="GO:0019843">
    <property type="term" value="F:rRNA binding"/>
    <property type="evidence" value="ECO:0007669"/>
    <property type="project" value="UniProtKB-UniRule"/>
</dbReference>
<dbReference type="GO" id="GO:0003735">
    <property type="term" value="F:structural constituent of ribosome"/>
    <property type="evidence" value="ECO:0007669"/>
    <property type="project" value="InterPro"/>
</dbReference>
<dbReference type="GO" id="GO:0006412">
    <property type="term" value="P:translation"/>
    <property type="evidence" value="ECO:0007669"/>
    <property type="project" value="UniProtKB-UniRule"/>
</dbReference>
<dbReference type="FunFam" id="3.10.430.100:FF:000006">
    <property type="entry name" value="50S ribosomal protein L9"/>
    <property type="match status" value="1"/>
</dbReference>
<dbReference type="FunFam" id="3.40.5.10:FF:000003">
    <property type="entry name" value="50S ribosomal protein L9"/>
    <property type="match status" value="1"/>
</dbReference>
<dbReference type="Gene3D" id="3.10.430.100">
    <property type="entry name" value="Ribosomal protein L9, C-terminal domain"/>
    <property type="match status" value="1"/>
</dbReference>
<dbReference type="Gene3D" id="3.40.5.10">
    <property type="entry name" value="Ribosomal protein L9, N-terminal domain"/>
    <property type="match status" value="1"/>
</dbReference>
<dbReference type="HAMAP" id="MF_00503">
    <property type="entry name" value="Ribosomal_bL9"/>
    <property type="match status" value="1"/>
</dbReference>
<dbReference type="InterPro" id="IPR000244">
    <property type="entry name" value="Ribosomal_bL9"/>
</dbReference>
<dbReference type="InterPro" id="IPR009027">
    <property type="entry name" value="Ribosomal_bL9/RNase_H1_N"/>
</dbReference>
<dbReference type="InterPro" id="IPR020594">
    <property type="entry name" value="Ribosomal_bL9_bac/chp"/>
</dbReference>
<dbReference type="InterPro" id="IPR020069">
    <property type="entry name" value="Ribosomal_bL9_C"/>
</dbReference>
<dbReference type="InterPro" id="IPR036791">
    <property type="entry name" value="Ribosomal_bL9_C_sf"/>
</dbReference>
<dbReference type="InterPro" id="IPR020070">
    <property type="entry name" value="Ribosomal_bL9_N"/>
</dbReference>
<dbReference type="InterPro" id="IPR036935">
    <property type="entry name" value="Ribosomal_bL9_N_sf"/>
</dbReference>
<dbReference type="NCBIfam" id="TIGR00158">
    <property type="entry name" value="L9"/>
    <property type="match status" value="1"/>
</dbReference>
<dbReference type="PANTHER" id="PTHR21368">
    <property type="entry name" value="50S RIBOSOMAL PROTEIN L9"/>
    <property type="match status" value="1"/>
</dbReference>
<dbReference type="Pfam" id="PF03948">
    <property type="entry name" value="Ribosomal_L9_C"/>
    <property type="match status" value="1"/>
</dbReference>
<dbReference type="Pfam" id="PF01281">
    <property type="entry name" value="Ribosomal_L9_N"/>
    <property type="match status" value="1"/>
</dbReference>
<dbReference type="SUPFAM" id="SSF55658">
    <property type="entry name" value="L9 N-domain-like"/>
    <property type="match status" value="1"/>
</dbReference>
<dbReference type="SUPFAM" id="SSF55653">
    <property type="entry name" value="Ribosomal protein L9 C-domain"/>
    <property type="match status" value="1"/>
</dbReference>
<dbReference type="PROSITE" id="PS00651">
    <property type="entry name" value="RIBOSOMAL_L9"/>
    <property type="match status" value="1"/>
</dbReference>
<name>RL9_THEFY</name>